<feature type="chain" id="PRO_1000069047" description="HTH-type transcriptional regulator UlaR">
    <location>
        <begin position="1"/>
        <end position="251"/>
    </location>
</feature>
<feature type="domain" description="HTH deoR-type" evidence="1">
    <location>
        <begin position="3"/>
        <end position="58"/>
    </location>
</feature>
<feature type="DNA-binding region" description="H-T-H motif" evidence="1">
    <location>
        <begin position="20"/>
        <end position="39"/>
    </location>
</feature>
<gene>
    <name evidence="1" type="primary">ulaR</name>
    <name type="ordered locus">EcHS_A4435</name>
</gene>
<reference key="1">
    <citation type="journal article" date="2008" name="J. Bacteriol.">
        <title>The pangenome structure of Escherichia coli: comparative genomic analysis of E. coli commensal and pathogenic isolates.</title>
        <authorList>
            <person name="Rasko D.A."/>
            <person name="Rosovitz M.J."/>
            <person name="Myers G.S.A."/>
            <person name="Mongodin E.F."/>
            <person name="Fricke W.F."/>
            <person name="Gajer P."/>
            <person name="Crabtree J."/>
            <person name="Sebaihia M."/>
            <person name="Thomson N.R."/>
            <person name="Chaudhuri R."/>
            <person name="Henderson I.R."/>
            <person name="Sperandio V."/>
            <person name="Ravel J."/>
        </authorList>
    </citation>
    <scope>NUCLEOTIDE SEQUENCE [LARGE SCALE GENOMIC DNA]</scope>
    <source>
        <strain>HS</strain>
    </source>
</reference>
<protein>
    <recommendedName>
        <fullName evidence="1">HTH-type transcriptional regulator UlaR</fullName>
    </recommendedName>
</protein>
<comment type="function">
    <text evidence="1">Represses ulaG and the ulaABCDEF operon.</text>
</comment>
<comment type="subcellular location">
    <subcellularLocation>
        <location evidence="1">Cytoplasm</location>
    </subcellularLocation>
</comment>
<name>ULAR_ECOHS</name>
<keyword id="KW-0963">Cytoplasm</keyword>
<keyword id="KW-0238">DNA-binding</keyword>
<keyword id="KW-0678">Repressor</keyword>
<keyword id="KW-0804">Transcription</keyword>
<keyword id="KW-0805">Transcription regulation</keyword>
<dbReference type="EMBL" id="CP000802">
    <property type="protein sequence ID" value="ABV08591.1"/>
    <property type="molecule type" value="Genomic_DNA"/>
</dbReference>
<dbReference type="RefSeq" id="WP_000133631.1">
    <property type="nucleotide sequence ID" value="NC_009800.1"/>
</dbReference>
<dbReference type="SMR" id="A8A7T7"/>
<dbReference type="GeneID" id="75202425"/>
<dbReference type="KEGG" id="ecx:EcHS_A4435"/>
<dbReference type="HOGENOM" id="CLU_060699_3_2_6"/>
<dbReference type="GO" id="GO:0005737">
    <property type="term" value="C:cytoplasm"/>
    <property type="evidence" value="ECO:0007669"/>
    <property type="project" value="UniProtKB-SubCell"/>
</dbReference>
<dbReference type="GO" id="GO:0003677">
    <property type="term" value="F:DNA binding"/>
    <property type="evidence" value="ECO:0007669"/>
    <property type="project" value="UniProtKB-KW"/>
</dbReference>
<dbReference type="GO" id="GO:0003700">
    <property type="term" value="F:DNA-binding transcription factor activity"/>
    <property type="evidence" value="ECO:0007669"/>
    <property type="project" value="InterPro"/>
</dbReference>
<dbReference type="GO" id="GO:0045892">
    <property type="term" value="P:negative regulation of DNA-templated transcription"/>
    <property type="evidence" value="ECO:0007669"/>
    <property type="project" value="UniProtKB-UniRule"/>
</dbReference>
<dbReference type="FunFam" id="1.10.10.10:FF:000160">
    <property type="entry name" value="HTH-type transcriptional regulator UlaR"/>
    <property type="match status" value="1"/>
</dbReference>
<dbReference type="Gene3D" id="1.10.10.10">
    <property type="entry name" value="Winged helix-like DNA-binding domain superfamily/Winged helix DNA-binding domain"/>
    <property type="match status" value="1"/>
</dbReference>
<dbReference type="HAMAP" id="MF_01563">
    <property type="entry name" value="HTH_type_UlaR"/>
    <property type="match status" value="1"/>
</dbReference>
<dbReference type="InterPro" id="IPR050313">
    <property type="entry name" value="Carb_Metab_HTH_regulators"/>
</dbReference>
<dbReference type="InterPro" id="IPR014036">
    <property type="entry name" value="DeoR-like_C"/>
</dbReference>
<dbReference type="InterPro" id="IPR001034">
    <property type="entry name" value="DeoR_HTH"/>
</dbReference>
<dbReference type="InterPro" id="IPR037171">
    <property type="entry name" value="NagB/RpiA_transferase-like"/>
</dbReference>
<dbReference type="InterPro" id="IPR018356">
    <property type="entry name" value="Tscrpt_reg_HTH_DeoR_CS"/>
</dbReference>
<dbReference type="InterPro" id="IPR023711">
    <property type="entry name" value="Tscrpt_reg_HTH_UlaR"/>
</dbReference>
<dbReference type="InterPro" id="IPR036388">
    <property type="entry name" value="WH-like_DNA-bd_sf"/>
</dbReference>
<dbReference type="InterPro" id="IPR036390">
    <property type="entry name" value="WH_DNA-bd_sf"/>
</dbReference>
<dbReference type="NCBIfam" id="NF010034">
    <property type="entry name" value="PRK13509.1"/>
    <property type="match status" value="1"/>
</dbReference>
<dbReference type="PANTHER" id="PTHR30363">
    <property type="entry name" value="HTH-TYPE TRANSCRIPTIONAL REGULATOR SRLR-RELATED"/>
    <property type="match status" value="1"/>
</dbReference>
<dbReference type="PANTHER" id="PTHR30363:SF55">
    <property type="entry name" value="HTH-TYPE TRANSCRIPTIONAL REGULATOR ULAR"/>
    <property type="match status" value="1"/>
</dbReference>
<dbReference type="Pfam" id="PF00455">
    <property type="entry name" value="DeoRC"/>
    <property type="match status" value="1"/>
</dbReference>
<dbReference type="Pfam" id="PF08220">
    <property type="entry name" value="HTH_DeoR"/>
    <property type="match status" value="1"/>
</dbReference>
<dbReference type="PRINTS" id="PR00037">
    <property type="entry name" value="HTHLACR"/>
</dbReference>
<dbReference type="SMART" id="SM01134">
    <property type="entry name" value="DeoRC"/>
    <property type="match status" value="1"/>
</dbReference>
<dbReference type="SMART" id="SM00420">
    <property type="entry name" value="HTH_DEOR"/>
    <property type="match status" value="1"/>
</dbReference>
<dbReference type="SUPFAM" id="SSF100950">
    <property type="entry name" value="NagB/RpiA/CoA transferase-like"/>
    <property type="match status" value="1"/>
</dbReference>
<dbReference type="SUPFAM" id="SSF46785">
    <property type="entry name" value="Winged helix' DNA-binding domain"/>
    <property type="match status" value="1"/>
</dbReference>
<dbReference type="PROSITE" id="PS00894">
    <property type="entry name" value="HTH_DEOR_1"/>
    <property type="match status" value="1"/>
</dbReference>
<dbReference type="PROSITE" id="PS51000">
    <property type="entry name" value="HTH_DEOR_2"/>
    <property type="match status" value="1"/>
</dbReference>
<proteinExistence type="inferred from homology"/>
<evidence type="ECO:0000255" key="1">
    <source>
        <dbReference type="HAMAP-Rule" id="MF_01563"/>
    </source>
</evidence>
<sequence>MTEAQRHQILLEMLAQLGFVTVEKVVERLGISPATARRDINKLDESGKLKKVRNGAEAITQQRPRWTPMNLHQAQNHDEKVRIAKAASQLVNPGESVVINCGSTAFLLGREMCGKPVQIITNYLPLANYLIDQEHDSVIIMGGQYNKSQSITLSPQGSENSLYAGHWMFTSGKGLTAEGLYKTDMLTAMAEQKMLSVVGKLVVLVDSSKIGERAGMLFSRADQIDMLITGKNANPEILQQLEAQGVSILRV</sequence>
<organism>
    <name type="scientific">Escherichia coli O9:H4 (strain HS)</name>
    <dbReference type="NCBI Taxonomy" id="331112"/>
    <lineage>
        <taxon>Bacteria</taxon>
        <taxon>Pseudomonadati</taxon>
        <taxon>Pseudomonadota</taxon>
        <taxon>Gammaproteobacteria</taxon>
        <taxon>Enterobacterales</taxon>
        <taxon>Enterobacteriaceae</taxon>
        <taxon>Escherichia</taxon>
    </lineage>
</organism>
<accession>A8A7T7</accession>